<gene>
    <name evidence="1" type="primary">rpmD</name>
    <name type="ordered locus">spyM18_0071</name>
</gene>
<evidence type="ECO:0000255" key="1">
    <source>
        <dbReference type="HAMAP-Rule" id="MF_01371"/>
    </source>
</evidence>
<evidence type="ECO:0000305" key="2"/>
<name>RL30_STRP8</name>
<keyword id="KW-0687">Ribonucleoprotein</keyword>
<keyword id="KW-0689">Ribosomal protein</keyword>
<reference key="1">
    <citation type="journal article" date="2002" name="Proc. Natl. Acad. Sci. U.S.A.">
        <title>Genome sequence and comparative microarray analysis of serotype M18 group A Streptococcus strains associated with acute rheumatic fever outbreaks.</title>
        <authorList>
            <person name="Smoot J.C."/>
            <person name="Barbian K.D."/>
            <person name="Van Gompel J.J."/>
            <person name="Smoot L.M."/>
            <person name="Chaussee M.S."/>
            <person name="Sylva G.L."/>
            <person name="Sturdevant D.E."/>
            <person name="Ricklefs S.M."/>
            <person name="Porcella S.F."/>
            <person name="Parkins L.D."/>
            <person name="Beres S.B."/>
            <person name="Campbell D.S."/>
            <person name="Smith T.M."/>
            <person name="Zhang Q."/>
            <person name="Kapur V."/>
            <person name="Daly J.A."/>
            <person name="Veasy L.G."/>
            <person name="Musser J.M."/>
        </authorList>
    </citation>
    <scope>NUCLEOTIDE SEQUENCE [LARGE SCALE GENOMIC DNA]</scope>
    <source>
        <strain>MGAS8232</strain>
    </source>
</reference>
<sequence length="60" mass="6442">MAQIKITLTKSPIGRKPEQRKTVVALGLGKLNSSVVKEDNAAIRGMVTAISHLVTVEDVK</sequence>
<accession>Q7CNP2</accession>
<comment type="subunit">
    <text evidence="1">Part of the 50S ribosomal subunit.</text>
</comment>
<comment type="similarity">
    <text evidence="1">Belongs to the universal ribosomal protein uL30 family.</text>
</comment>
<feature type="chain" id="PRO_0000273871" description="Large ribosomal subunit protein uL30">
    <location>
        <begin position="1"/>
        <end position="60"/>
    </location>
</feature>
<dbReference type="EMBL" id="AE009949">
    <property type="protein sequence ID" value="AAL96894.1"/>
    <property type="molecule type" value="Genomic_DNA"/>
</dbReference>
<dbReference type="RefSeq" id="WP_002986624.1">
    <property type="nucleotide sequence ID" value="NC_003485.1"/>
</dbReference>
<dbReference type="SMR" id="Q7CNP2"/>
<dbReference type="GeneID" id="69900044"/>
<dbReference type="KEGG" id="spm:spyM18_0071"/>
<dbReference type="HOGENOM" id="CLU_131047_2_1_9"/>
<dbReference type="GO" id="GO:0022625">
    <property type="term" value="C:cytosolic large ribosomal subunit"/>
    <property type="evidence" value="ECO:0007669"/>
    <property type="project" value="TreeGrafter"/>
</dbReference>
<dbReference type="GO" id="GO:0003735">
    <property type="term" value="F:structural constituent of ribosome"/>
    <property type="evidence" value="ECO:0007669"/>
    <property type="project" value="InterPro"/>
</dbReference>
<dbReference type="GO" id="GO:0006412">
    <property type="term" value="P:translation"/>
    <property type="evidence" value="ECO:0007669"/>
    <property type="project" value="UniProtKB-UniRule"/>
</dbReference>
<dbReference type="CDD" id="cd01658">
    <property type="entry name" value="Ribosomal_L30"/>
    <property type="match status" value="1"/>
</dbReference>
<dbReference type="FunFam" id="3.30.1390.20:FF:000001">
    <property type="entry name" value="50S ribosomal protein L30"/>
    <property type="match status" value="1"/>
</dbReference>
<dbReference type="Gene3D" id="3.30.1390.20">
    <property type="entry name" value="Ribosomal protein L30, ferredoxin-like fold domain"/>
    <property type="match status" value="1"/>
</dbReference>
<dbReference type="HAMAP" id="MF_01371_B">
    <property type="entry name" value="Ribosomal_uL30_B"/>
    <property type="match status" value="1"/>
</dbReference>
<dbReference type="InterPro" id="IPR036919">
    <property type="entry name" value="Ribo_uL30_ferredoxin-like_sf"/>
</dbReference>
<dbReference type="InterPro" id="IPR005996">
    <property type="entry name" value="Ribosomal_uL30_bac-type"/>
</dbReference>
<dbReference type="InterPro" id="IPR018038">
    <property type="entry name" value="Ribosomal_uL30_CS"/>
</dbReference>
<dbReference type="InterPro" id="IPR016082">
    <property type="entry name" value="Ribosomal_uL30_ferredoxin-like"/>
</dbReference>
<dbReference type="NCBIfam" id="TIGR01308">
    <property type="entry name" value="rpmD_bact"/>
    <property type="match status" value="1"/>
</dbReference>
<dbReference type="PANTHER" id="PTHR15892:SF2">
    <property type="entry name" value="LARGE RIBOSOMAL SUBUNIT PROTEIN UL30M"/>
    <property type="match status" value="1"/>
</dbReference>
<dbReference type="PANTHER" id="PTHR15892">
    <property type="entry name" value="MITOCHONDRIAL RIBOSOMAL PROTEIN L30"/>
    <property type="match status" value="1"/>
</dbReference>
<dbReference type="Pfam" id="PF00327">
    <property type="entry name" value="Ribosomal_L30"/>
    <property type="match status" value="1"/>
</dbReference>
<dbReference type="PIRSF" id="PIRSF002211">
    <property type="entry name" value="Ribosomal_L30_bac-type"/>
    <property type="match status" value="1"/>
</dbReference>
<dbReference type="SUPFAM" id="SSF55129">
    <property type="entry name" value="Ribosomal protein L30p/L7e"/>
    <property type="match status" value="1"/>
</dbReference>
<dbReference type="PROSITE" id="PS00634">
    <property type="entry name" value="RIBOSOMAL_L30"/>
    <property type="match status" value="1"/>
</dbReference>
<protein>
    <recommendedName>
        <fullName evidence="1">Large ribosomal subunit protein uL30</fullName>
    </recommendedName>
    <alternativeName>
        <fullName evidence="2">50S ribosomal protein L30</fullName>
    </alternativeName>
</protein>
<organism>
    <name type="scientific">Streptococcus pyogenes serotype M18 (strain MGAS8232)</name>
    <dbReference type="NCBI Taxonomy" id="186103"/>
    <lineage>
        <taxon>Bacteria</taxon>
        <taxon>Bacillati</taxon>
        <taxon>Bacillota</taxon>
        <taxon>Bacilli</taxon>
        <taxon>Lactobacillales</taxon>
        <taxon>Streptococcaceae</taxon>
        <taxon>Streptococcus</taxon>
    </lineage>
</organism>
<proteinExistence type="inferred from homology"/>